<evidence type="ECO:0000269" key="1">
    <source>
    </source>
</evidence>
<evidence type="ECO:0000269" key="2">
    <source>
    </source>
</evidence>
<evidence type="ECO:0000269" key="3">
    <source>
    </source>
</evidence>
<evidence type="ECO:0000269" key="4">
    <source ref="4"/>
</evidence>
<evidence type="ECO:0000303" key="5">
    <source>
    </source>
</evidence>
<evidence type="ECO:0000305" key="6"/>
<evidence type="ECO:0000312" key="7">
    <source>
        <dbReference type="EMBL" id="AAK72501.1"/>
    </source>
</evidence>
<evidence type="ECO:0000312" key="8">
    <source>
        <dbReference type="EMBL" id="CBH21411.1"/>
    </source>
</evidence>
<evidence type="ECO:0000312" key="9">
    <source>
        <dbReference type="PDB" id="3KP0"/>
    </source>
</evidence>
<evidence type="ECO:0007829" key="10">
    <source>
        <dbReference type="PDB" id="3KP1"/>
    </source>
</evidence>
<protein>
    <recommendedName>
        <fullName>D-ornithine 4,5-aminomutase subunit alpha</fullName>
        <ecNumber evidence="8">5.4.3.5</ecNumber>
    </recommendedName>
    <alternativeName>
        <fullName evidence="5">D-ornithine aminomutase S component</fullName>
        <shortName>OAM-S</shortName>
    </alternativeName>
</protein>
<keyword id="KW-0002">3D-structure</keyword>
<keyword id="KW-0903">Direct protein sequencing</keyword>
<keyword id="KW-0413">Isomerase</keyword>
<keyword id="KW-1185">Reference proteome</keyword>
<accession>E3PY96</accession>
<accession>Q8VPJ6</accession>
<reference evidence="6 7" key="1">
    <citation type="journal article" date="2001" name="J. Biol. Chem.">
        <title>Cloning, sequencing, heterologous expression, purification, and characterization of adenosylcobalamin-dependent D-ornithine aminomutase from Clostridium sticklandii.</title>
        <authorList>
            <person name="Chen H.P."/>
            <person name="Wu S.H."/>
            <person name="Lin Y.L."/>
            <person name="Chen C.M."/>
            <person name="Tsay S.S."/>
        </authorList>
    </citation>
    <scope>NUCLEOTIDE SEQUENCE [GENOMIC DNA]</scope>
    <scope>PROTEIN SEQUENCE OF 1-25</scope>
    <scope>FUNCTION</scope>
    <scope>CATALYTIC ACTIVITY</scope>
    <scope>SUBUNIT</scope>
    <source>
        <strain evidence="1">ATCC 12662 / DSM 519 / JCM 1433 / CCUG 9281 / NCIMB 10654 / HF</strain>
    </source>
</reference>
<reference key="2">
    <citation type="journal article" date="2010" name="BMC Genomics">
        <title>Clostridium sticklandii, a specialist in amino acid degradation:revisiting its metabolism through its genome sequence.</title>
        <authorList>
            <person name="Fonknechten N."/>
            <person name="Chaussonnerie S."/>
            <person name="Tricot S."/>
            <person name="Lajus A."/>
            <person name="Andreesen J.R."/>
            <person name="Perchat N."/>
            <person name="Pelletier E."/>
            <person name="Gouyvenoux M."/>
            <person name="Barbe V."/>
            <person name="Salanoubat M."/>
            <person name="Le Paslier D."/>
            <person name="Weissenbach J."/>
            <person name="Cohen G.N."/>
            <person name="Kreimeyer A."/>
        </authorList>
    </citation>
    <scope>NUCLEOTIDE SEQUENCE [LARGE SCALE GENOMIC DNA]</scope>
    <source>
        <strain>ATCC 12662 / DSM 519 / JCM 1433 / CCUG 9281 / NCIMB 10654 / HF</strain>
    </source>
</reference>
<reference evidence="6" key="3">
    <citation type="journal article" date="1973" name="Biochemistry">
        <title>Purification and properties of a pyridoxal phosphate and coenzyme B 12 dependent D-ornithine 5,4-aminomutase.</title>
        <authorList>
            <person name="Somack R."/>
            <person name="Costilow R.N."/>
        </authorList>
    </citation>
    <scope>FUNCTION</scope>
    <scope>CATALYTIC ACTIVITY</scope>
    <scope>ACTIVITY REGULATION</scope>
    <scope>SUBSTRATE SPECIFICITY</scope>
    <scope>BIOPHYSICOCHEMICAL PROPERTIES</scope>
    <source>
        <strain evidence="3">ATCC 12662 / DSM 519 / JCM 1433 / CCUG 9281 / NCIMB 10654 / HF</strain>
    </source>
</reference>
<reference evidence="6" key="4">
    <citation type="book" date="1982" name="B12">
        <title>Amino mutases.</title>
        <editorList>
            <person name="Dolphin D."/>
        </editorList>
        <authorList>
            <person name="Baker J.J."/>
            <person name="Stadtman T.C."/>
        </authorList>
    </citation>
    <scope>FUNCTION</scope>
    <scope>CATALYTIC ACTIVITY</scope>
    <scope>ACTIVITY REGULATION</scope>
    <scope>SUBSTRATE SPECIFICITY</scope>
    <scope>BIOPHYSICOCHEMICAL PROPERTIES</scope>
    <scope>SUBUNIT</scope>
</reference>
<reference evidence="6 9" key="5">
    <citation type="journal article" date="2010" name="J. Biol. Chem.">
        <title>Large-scale domain dynamics and adenosylcobalamin reorientation orchestrate radical catalysis in ornithine 4,5-aminomutase.</title>
        <authorList>
            <person name="Wolthers K.R."/>
            <person name="Levy C."/>
            <person name="Scrutton N.S."/>
            <person name="Leys D."/>
        </authorList>
    </citation>
    <scope>X-RAY CRYSTALLOGRAPHY (2.01 ANGSTROMS) IN COMPLEX WITH ORAE SUBUNIT</scope>
    <scope>SUBUNIT</scope>
    <source>
        <strain evidence="2">ATCC 12662 / DSM 519 / JCM 1433 / CCUG 9281 / NCIMB 10654 / HF</strain>
    </source>
</reference>
<proteinExistence type="evidence at protein level"/>
<organism>
    <name type="scientific">Acetoanaerobium sticklandii (strain ATCC 12662 / DSM 519 / JCM 1433 / CCUG 9281 / NCIMB 10654 / HF)</name>
    <name type="common">Clostridium sticklandii</name>
    <dbReference type="NCBI Taxonomy" id="499177"/>
    <lineage>
        <taxon>Bacteria</taxon>
        <taxon>Bacillati</taxon>
        <taxon>Bacillota</taxon>
        <taxon>Clostridia</taxon>
        <taxon>Peptostreptococcales</taxon>
        <taxon>Filifactoraceae</taxon>
        <taxon>Acetoanaerobium</taxon>
    </lineage>
</organism>
<sequence>MKRADDFQQRRAHLANLSDEELQTRFWEMAEKIVDPLLDLGKKNTTPSIERSVLLRMGFSSLEAKAIVDKTMDRGLMGKGAGHIVYKIAKEKNISVREAGLALSEGKYWDDAIQIFKGGVK</sequence>
<gene>
    <name type="primary">oraS</name>
    <name type="ordered locus">CLOST_1291</name>
</gene>
<dbReference type="EC" id="5.4.3.5" evidence="8"/>
<dbReference type="EMBL" id="AY038595">
    <property type="protein sequence ID" value="AAK72501.1"/>
    <property type="molecule type" value="Genomic_DNA"/>
</dbReference>
<dbReference type="EMBL" id="FP565809">
    <property type="protein sequence ID" value="CBH21411.1"/>
    <property type="molecule type" value="Genomic_DNA"/>
</dbReference>
<dbReference type="PDB" id="3KOW">
    <property type="method" value="X-ray"/>
    <property type="resolution" value="2.90 A"/>
    <property type="chains" value="E/F/G/H=1-121"/>
</dbReference>
<dbReference type="PDB" id="3KOX">
    <property type="method" value="X-ray"/>
    <property type="resolution" value="2.40 A"/>
    <property type="chains" value="E/F/G/H=1-121"/>
</dbReference>
<dbReference type="PDB" id="3KOY">
    <property type="method" value="X-ray"/>
    <property type="resolution" value="2.80 A"/>
    <property type="chains" value="E/F/G/H=1-121"/>
</dbReference>
<dbReference type="PDB" id="3KOZ">
    <property type="method" value="X-ray"/>
    <property type="resolution" value="2.80 A"/>
    <property type="chains" value="E/F/G/H=1-121"/>
</dbReference>
<dbReference type="PDB" id="3KP0">
    <property type="method" value="X-ray"/>
    <property type="resolution" value="2.80 A"/>
    <property type="chains" value="E/F/G/H=1-121"/>
</dbReference>
<dbReference type="PDB" id="3KP1">
    <property type="method" value="X-ray"/>
    <property type="resolution" value="2.01 A"/>
    <property type="chains" value="E/F/G/H=1-121"/>
</dbReference>
<dbReference type="PDBsum" id="3KOW"/>
<dbReference type="PDBsum" id="3KOX"/>
<dbReference type="PDBsum" id="3KOY"/>
<dbReference type="PDBsum" id="3KOZ"/>
<dbReference type="PDBsum" id="3KP0"/>
<dbReference type="PDBsum" id="3KP1"/>
<dbReference type="SMR" id="E3PY96"/>
<dbReference type="STRING" id="1511.CLOST_1291"/>
<dbReference type="KEGG" id="cst:CLOST_1291"/>
<dbReference type="eggNOG" id="ENOG5032S0N">
    <property type="taxonomic scope" value="Bacteria"/>
</dbReference>
<dbReference type="HOGENOM" id="CLU_153213_0_0_9"/>
<dbReference type="BioCyc" id="MetaCyc:MONOMER-12492"/>
<dbReference type="BRENDA" id="5.4.3.5">
    <property type="organism ID" value="1522"/>
</dbReference>
<dbReference type="EvolutionaryTrace" id="E3PY96"/>
<dbReference type="Proteomes" id="UP000007041">
    <property type="component" value="Chromosome"/>
</dbReference>
<dbReference type="GO" id="GO:0031419">
    <property type="term" value="F:cobalamin binding"/>
    <property type="evidence" value="ECO:0007669"/>
    <property type="project" value="InterPro"/>
</dbReference>
<dbReference type="GO" id="GO:0047831">
    <property type="term" value="F:D-ornithine 4,5-aminomutase activity"/>
    <property type="evidence" value="ECO:0007669"/>
    <property type="project" value="UniProtKB-EC"/>
</dbReference>
<dbReference type="Gene3D" id="6.10.250.2220">
    <property type="match status" value="1"/>
</dbReference>
<dbReference type="Gene3D" id="1.10.8.1000">
    <property type="entry name" value="Ornithine 4,5 aminomutase S component, alpha subunit-like"/>
    <property type="match status" value="1"/>
</dbReference>
<dbReference type="InterPro" id="IPR016176">
    <property type="entry name" value="Cbl-dep_enz_cat"/>
</dbReference>
<dbReference type="InterPro" id="IPR015130">
    <property type="entry name" value="Lys-AminoMut_A"/>
</dbReference>
<dbReference type="Pfam" id="PF16552">
    <property type="entry name" value="OAM_alpha"/>
    <property type="match status" value="1"/>
</dbReference>
<dbReference type="SUPFAM" id="SSF51703">
    <property type="entry name" value="Cobalamin (vitamin B12)-dependent enzymes"/>
    <property type="match status" value="1"/>
</dbReference>
<feature type="chain" id="PRO_0000421804" description="D-ornithine 4,5-aminomutase subunit alpha">
    <location>
        <begin position="1"/>
        <end position="121"/>
    </location>
</feature>
<feature type="helix" evidence="10">
    <location>
        <begin position="7"/>
        <end position="10"/>
    </location>
</feature>
<feature type="helix" evidence="10">
    <location>
        <begin position="12"/>
        <end position="14"/>
    </location>
</feature>
<feature type="helix" evidence="10">
    <location>
        <begin position="19"/>
        <end position="43"/>
    </location>
</feature>
<feature type="helix" evidence="10">
    <location>
        <begin position="47"/>
        <end position="56"/>
    </location>
</feature>
<feature type="helix" evidence="10">
    <location>
        <begin position="61"/>
        <end position="73"/>
    </location>
</feature>
<feature type="helix" evidence="10">
    <location>
        <begin position="77"/>
        <end position="79"/>
    </location>
</feature>
<feature type="helix" evidence="10">
    <location>
        <begin position="81"/>
        <end position="91"/>
    </location>
</feature>
<feature type="helix" evidence="10">
    <location>
        <begin position="96"/>
        <end position="104"/>
    </location>
</feature>
<feature type="helix" evidence="10">
    <location>
        <begin position="109"/>
        <end position="113"/>
    </location>
</feature>
<name>OAMS_ACESD</name>
<comment type="function">
    <text evidence="1 3 4">Component of a complex that catalyzes the reversible migration of the omega amino group of D-ornithine to C-4 to form (2R,4S)-2,4-diaminopentanoic acid. The role of OraS remains obscure; however, it seems to be required for a correct folding of the OraE subunit. The complex is active only on D-ornithine and 2,4-diaminopentanoic acid and not active on L-ornithine, L-beta-lysine, L-alpha-lysine or D-alpha-lysine.</text>
</comment>
<comment type="catalytic activity">
    <reaction evidence="1 3 4">
        <text>D-ornithine = (2R,4S)-2,4-diaminopentanoate</text>
        <dbReference type="Rhea" id="RHEA:14893"/>
        <dbReference type="ChEBI" id="CHEBI:57668"/>
        <dbReference type="ChEBI" id="CHEBI:58697"/>
        <dbReference type="EC" id="5.4.3.5"/>
    </reaction>
</comment>
<comment type="activity regulation">
    <text evidence="3 4">Increased activity in the presence of dithiothreitol (DTT) in vitro. Inhibited by 1 mM potassium phosphate and potassium chloride. Inhibited by L-alpha-ornithine, D,L-alpha-lysine, L-beta-lysine (50%-60%), L-alpha-lysine (26%) and by delta-amino-n-valeric acid to a lesser extent. Significant decrease in activity is observed in the presence of 0.2 mM p-chloromercuribenzoate, N-ethylmaleimide and also by 2 mM iodoacetate to a lesser extent but not inhibited by arsenite.</text>
</comment>
<comment type="biophysicochemical properties">
    <phDependence>
        <text evidence="3 4">Optimum pH is 9.0 or between 8.5-8.7 (with Tris-HCl buffer). Half-maximal activity is observed at pH 7.4 and 9.7.</text>
    </phDependence>
    <temperatureDependence>
        <text evidence="3 4">Optimum temperature is 37 degrees Celsius for native enzyme. Displays half-maximal activity at 23 degrees Celsius and 49 degrees Celsius. Rapidly inactivated at temperatures above 45 degrees Celsius. Loses more than 35% and 30% of its activity when stored at -20 degrees Celsius for 1 month and at 4 degrees Celsius for 48 hours, respectively.</text>
    </temperatureDependence>
</comment>
<comment type="subunit">
    <text evidence="1 2 4">Heterotetramer of 2 alpha (OraS) and 2 beta (OraE) subunits.</text>
</comment>